<feature type="chain" id="PRO_1000136859" description="tRNA pseudouridine synthase D">
    <location>
        <begin position="1"/>
        <end position="367"/>
    </location>
</feature>
<feature type="domain" description="TRUD" evidence="1">
    <location>
        <begin position="156"/>
        <end position="316"/>
    </location>
</feature>
<feature type="active site" description="Nucleophile" evidence="1">
    <location>
        <position position="80"/>
    </location>
</feature>
<evidence type="ECO:0000255" key="1">
    <source>
        <dbReference type="HAMAP-Rule" id="MF_01082"/>
    </source>
</evidence>
<sequence>MSDSPVLPRAHGAAVLTAAMRSVAEDFQVDELPAFDASGEGEHLLLSVRKRGQNTAYVAKRLAQWAGIAEMGIGYAGLKDRHAVTTQRFSVHLPKRIAPDLSALDDDDMQVVEHTWHNRKLQRGALHGNRFVLTLREVVGDQTAIDARLHAIAARGIPNWFGEQRFGRDGGNVAAALAMFGYTRQLDGTLAPAPKRRLRNDQRSLLLSAARSALFNQVLTARVEQGDWDAPLDGEAWMLDGSRSVFGPEPWSEVLAERLARFDIHPSGPLWGAGELRCSADAAAIEQAALSDPQSLALRTGLEAAGLKQERRALRLRPQALAHAWLDAQTLQLTFALPPGCYATAVLWELGDVVDAARVAPQSRSEG</sequence>
<gene>
    <name evidence="1" type="primary">truD</name>
    <name type="ordered locus">xcc-b100_2555</name>
</gene>
<comment type="function">
    <text evidence="1">Responsible for synthesis of pseudouridine from uracil-13 in transfer RNAs.</text>
</comment>
<comment type="catalytic activity">
    <reaction evidence="1">
        <text>uridine(13) in tRNA = pseudouridine(13) in tRNA</text>
        <dbReference type="Rhea" id="RHEA:42540"/>
        <dbReference type="Rhea" id="RHEA-COMP:10105"/>
        <dbReference type="Rhea" id="RHEA-COMP:10106"/>
        <dbReference type="ChEBI" id="CHEBI:65314"/>
        <dbReference type="ChEBI" id="CHEBI:65315"/>
        <dbReference type="EC" id="5.4.99.27"/>
    </reaction>
</comment>
<comment type="similarity">
    <text evidence="1">Belongs to the pseudouridine synthase TruD family.</text>
</comment>
<reference key="1">
    <citation type="journal article" date="2008" name="J. Biotechnol.">
        <title>The genome of Xanthomonas campestris pv. campestris B100 and its use for the reconstruction of metabolic pathways involved in xanthan biosynthesis.</title>
        <authorList>
            <person name="Vorhoelter F.-J."/>
            <person name="Schneiker S."/>
            <person name="Goesmann A."/>
            <person name="Krause L."/>
            <person name="Bekel T."/>
            <person name="Kaiser O."/>
            <person name="Linke B."/>
            <person name="Patschkowski T."/>
            <person name="Rueckert C."/>
            <person name="Schmid J."/>
            <person name="Sidhu V.K."/>
            <person name="Sieber V."/>
            <person name="Tauch A."/>
            <person name="Watt S.A."/>
            <person name="Weisshaar B."/>
            <person name="Becker A."/>
            <person name="Niehaus K."/>
            <person name="Puehler A."/>
        </authorList>
    </citation>
    <scope>NUCLEOTIDE SEQUENCE [LARGE SCALE GENOMIC DNA]</scope>
    <source>
        <strain>B100</strain>
    </source>
</reference>
<keyword id="KW-0413">Isomerase</keyword>
<keyword id="KW-0819">tRNA processing</keyword>
<name>TRUD_XANCB</name>
<dbReference type="EC" id="5.4.99.27" evidence="1"/>
<dbReference type="EMBL" id="AM920689">
    <property type="protein sequence ID" value="CAP51915.1"/>
    <property type="molecule type" value="Genomic_DNA"/>
</dbReference>
<dbReference type="SMR" id="B0RU01"/>
<dbReference type="KEGG" id="xca:xcc-b100_2555"/>
<dbReference type="HOGENOM" id="CLU_005281_4_0_6"/>
<dbReference type="Proteomes" id="UP000001188">
    <property type="component" value="Chromosome"/>
</dbReference>
<dbReference type="GO" id="GO:0005829">
    <property type="term" value="C:cytosol"/>
    <property type="evidence" value="ECO:0007669"/>
    <property type="project" value="TreeGrafter"/>
</dbReference>
<dbReference type="GO" id="GO:0003723">
    <property type="term" value="F:RNA binding"/>
    <property type="evidence" value="ECO:0007669"/>
    <property type="project" value="InterPro"/>
</dbReference>
<dbReference type="GO" id="GO:0160150">
    <property type="term" value="F:tRNA pseudouridine(13) synthase activity"/>
    <property type="evidence" value="ECO:0007669"/>
    <property type="project" value="UniProtKB-EC"/>
</dbReference>
<dbReference type="GO" id="GO:0031119">
    <property type="term" value="P:tRNA pseudouridine synthesis"/>
    <property type="evidence" value="ECO:0007669"/>
    <property type="project" value="UniProtKB-UniRule"/>
</dbReference>
<dbReference type="CDD" id="cd02575">
    <property type="entry name" value="PseudoU_synth_EcTruD"/>
    <property type="match status" value="1"/>
</dbReference>
<dbReference type="Gene3D" id="3.30.2350.20">
    <property type="entry name" value="TruD, catalytic domain"/>
    <property type="match status" value="1"/>
</dbReference>
<dbReference type="Gene3D" id="3.30.2340.10">
    <property type="entry name" value="TruD, insertion domain"/>
    <property type="match status" value="1"/>
</dbReference>
<dbReference type="HAMAP" id="MF_01082">
    <property type="entry name" value="TruD"/>
    <property type="match status" value="1"/>
</dbReference>
<dbReference type="InterPro" id="IPR020103">
    <property type="entry name" value="PsdUridine_synth_cat_dom_sf"/>
</dbReference>
<dbReference type="InterPro" id="IPR001656">
    <property type="entry name" value="PsdUridine_synth_TruD"/>
</dbReference>
<dbReference type="InterPro" id="IPR020119">
    <property type="entry name" value="PsdUridine_synth_TruD_CS"/>
</dbReference>
<dbReference type="InterPro" id="IPR011760">
    <property type="entry name" value="PsdUridine_synth_TruD_insert"/>
</dbReference>
<dbReference type="InterPro" id="IPR042214">
    <property type="entry name" value="TruD_catalytic"/>
</dbReference>
<dbReference type="InterPro" id="IPR043165">
    <property type="entry name" value="TruD_insert_sf"/>
</dbReference>
<dbReference type="InterPro" id="IPR050170">
    <property type="entry name" value="TruD_pseudoU_synthase"/>
</dbReference>
<dbReference type="NCBIfam" id="NF002153">
    <property type="entry name" value="PRK00984.1-2"/>
    <property type="match status" value="1"/>
</dbReference>
<dbReference type="PANTHER" id="PTHR47811">
    <property type="entry name" value="TRNA PSEUDOURIDINE SYNTHASE D"/>
    <property type="match status" value="1"/>
</dbReference>
<dbReference type="PANTHER" id="PTHR47811:SF1">
    <property type="entry name" value="TRNA PSEUDOURIDINE SYNTHASE D"/>
    <property type="match status" value="1"/>
</dbReference>
<dbReference type="Pfam" id="PF01142">
    <property type="entry name" value="TruD"/>
    <property type="match status" value="2"/>
</dbReference>
<dbReference type="SUPFAM" id="SSF55120">
    <property type="entry name" value="Pseudouridine synthase"/>
    <property type="match status" value="1"/>
</dbReference>
<dbReference type="PROSITE" id="PS50984">
    <property type="entry name" value="TRUD"/>
    <property type="match status" value="1"/>
</dbReference>
<dbReference type="PROSITE" id="PS01268">
    <property type="entry name" value="UPF0024"/>
    <property type="match status" value="1"/>
</dbReference>
<accession>B0RU01</accession>
<proteinExistence type="inferred from homology"/>
<organism>
    <name type="scientific">Xanthomonas campestris pv. campestris (strain B100)</name>
    <dbReference type="NCBI Taxonomy" id="509169"/>
    <lineage>
        <taxon>Bacteria</taxon>
        <taxon>Pseudomonadati</taxon>
        <taxon>Pseudomonadota</taxon>
        <taxon>Gammaproteobacteria</taxon>
        <taxon>Lysobacterales</taxon>
        <taxon>Lysobacteraceae</taxon>
        <taxon>Xanthomonas</taxon>
    </lineage>
</organism>
<protein>
    <recommendedName>
        <fullName evidence="1">tRNA pseudouridine synthase D</fullName>
        <ecNumber evidence="1">5.4.99.27</ecNumber>
    </recommendedName>
    <alternativeName>
        <fullName evidence="1">tRNA pseudouridine(13) synthase</fullName>
    </alternativeName>
    <alternativeName>
        <fullName evidence="1">tRNA pseudouridylate synthase D</fullName>
    </alternativeName>
    <alternativeName>
        <fullName evidence="1">tRNA-uridine isomerase D</fullName>
    </alternativeName>
</protein>